<sequence>MPYTPHTPEEIRQMLDVIGVKSIDDLFAEIPPEMQPRSFDIPEGMSEMEVCARIQRMAAKNRIDLVSYLGAGFYDHHIPKAVDNLVSRGEFYTAYTPYQPEASQGTLQAIFEYQTAVCRLMEMEVANASVYDGGSAIFEAMMMAARATRRSKLVIDEALSPIYRTMLASYTSNLNMELVTVAHNEGRSDKQALMDAVDDKCAAVVVQNPNFFGAVDDFTELFTHARSCNALGVISVYPVMQSVLKTPGEMGADIAVADGQSLGMPLSFGGPYLGIMTCTKKLARQIPGRIAGRTKDVDGKTGYVLTLQAREQHIRRAKATSNICSNQALCALRAIIHMCLTGPEGLVRTAELSMERAHYAADRLTALPGVSLLHDAPFCNEFALRLPVSAYDVVDRLVNHGVVPGFPLGGYYAGMDDVLLVACTEKHSFEQIGIMAELVGGML</sequence>
<proteinExistence type="inferred from homology"/>
<protein>
    <recommendedName>
        <fullName evidence="1">Probable glycine dehydrogenase (decarboxylating) subunit 1</fullName>
        <ecNumber evidence="1">1.4.4.2</ecNumber>
    </recommendedName>
    <alternativeName>
        <fullName evidence="1">Glycine cleavage system P-protein subunit 1</fullName>
    </alternativeName>
    <alternativeName>
        <fullName evidence="1">Glycine decarboxylase subunit 1</fullName>
    </alternativeName>
    <alternativeName>
        <fullName evidence="1">Glycine dehydrogenase (aminomethyl-transferring) subunit 1</fullName>
    </alternativeName>
</protein>
<keyword id="KW-0560">Oxidoreductase</keyword>
<keyword id="KW-1185">Reference proteome</keyword>
<dbReference type="EC" id="1.4.4.2" evidence="1"/>
<dbReference type="EMBL" id="CP000112">
    <property type="protein sequence ID" value="ABB38489.1"/>
    <property type="molecule type" value="Genomic_DNA"/>
</dbReference>
<dbReference type="RefSeq" id="WP_011367635.1">
    <property type="nucleotide sequence ID" value="NC_007519.1"/>
</dbReference>
<dbReference type="SMR" id="Q311A7"/>
<dbReference type="STRING" id="207559.Dde_1692"/>
<dbReference type="KEGG" id="dde:Dde_1692"/>
<dbReference type="eggNOG" id="COG0403">
    <property type="taxonomic scope" value="Bacteria"/>
</dbReference>
<dbReference type="HOGENOM" id="CLU_004620_0_2_7"/>
<dbReference type="Proteomes" id="UP000002710">
    <property type="component" value="Chromosome"/>
</dbReference>
<dbReference type="GO" id="GO:0004375">
    <property type="term" value="F:glycine dehydrogenase (decarboxylating) activity"/>
    <property type="evidence" value="ECO:0007669"/>
    <property type="project" value="UniProtKB-EC"/>
</dbReference>
<dbReference type="GO" id="GO:0019464">
    <property type="term" value="P:glycine decarboxylation via glycine cleavage system"/>
    <property type="evidence" value="ECO:0007669"/>
    <property type="project" value="UniProtKB-UniRule"/>
</dbReference>
<dbReference type="GO" id="GO:0009116">
    <property type="term" value="P:nucleoside metabolic process"/>
    <property type="evidence" value="ECO:0007669"/>
    <property type="project" value="InterPro"/>
</dbReference>
<dbReference type="Gene3D" id="3.90.1150.10">
    <property type="entry name" value="Aspartate Aminotransferase, domain 1"/>
    <property type="match status" value="1"/>
</dbReference>
<dbReference type="Gene3D" id="3.40.640.10">
    <property type="entry name" value="Type I PLP-dependent aspartate aminotransferase-like (Major domain)"/>
    <property type="match status" value="1"/>
</dbReference>
<dbReference type="HAMAP" id="MF_00712">
    <property type="entry name" value="GcvPA"/>
    <property type="match status" value="1"/>
</dbReference>
<dbReference type="InterPro" id="IPR023010">
    <property type="entry name" value="GcvPA"/>
</dbReference>
<dbReference type="InterPro" id="IPR049315">
    <property type="entry name" value="GDC-P_N"/>
</dbReference>
<dbReference type="InterPro" id="IPR015424">
    <property type="entry name" value="PyrdxlP-dep_Trfase"/>
</dbReference>
<dbReference type="InterPro" id="IPR015421">
    <property type="entry name" value="PyrdxlP-dep_Trfase_major"/>
</dbReference>
<dbReference type="InterPro" id="IPR015422">
    <property type="entry name" value="PyrdxlP-dep_Trfase_small"/>
</dbReference>
<dbReference type="NCBIfam" id="NF001696">
    <property type="entry name" value="PRK00451.1"/>
    <property type="match status" value="1"/>
</dbReference>
<dbReference type="PANTHER" id="PTHR42806">
    <property type="entry name" value="GLYCINE CLEAVAGE SYSTEM P-PROTEIN"/>
    <property type="match status" value="1"/>
</dbReference>
<dbReference type="PANTHER" id="PTHR42806:SF1">
    <property type="entry name" value="GLYCINE DEHYDROGENASE (DECARBOXYLATING)"/>
    <property type="match status" value="1"/>
</dbReference>
<dbReference type="Pfam" id="PF02347">
    <property type="entry name" value="GDC-P"/>
    <property type="match status" value="1"/>
</dbReference>
<dbReference type="PIRSF" id="PIRSF006815">
    <property type="entry name" value="GcvPA"/>
    <property type="match status" value="1"/>
</dbReference>
<dbReference type="SUPFAM" id="SSF53383">
    <property type="entry name" value="PLP-dependent transferases"/>
    <property type="match status" value="1"/>
</dbReference>
<name>GCSPA_OLEA2</name>
<organism>
    <name type="scientific">Oleidesulfovibrio alaskensis (strain ATCC BAA-1058 / DSM 17464 / G20)</name>
    <name type="common">Desulfovibrio alaskensis</name>
    <dbReference type="NCBI Taxonomy" id="207559"/>
    <lineage>
        <taxon>Bacteria</taxon>
        <taxon>Pseudomonadati</taxon>
        <taxon>Thermodesulfobacteriota</taxon>
        <taxon>Desulfovibrionia</taxon>
        <taxon>Desulfovibrionales</taxon>
        <taxon>Desulfovibrionaceae</taxon>
        <taxon>Oleidesulfovibrio</taxon>
    </lineage>
</organism>
<gene>
    <name evidence="1" type="primary">gcvPA</name>
    <name type="ordered locus">Dde_1692</name>
</gene>
<feature type="chain" id="PRO_1000045643" description="Probable glycine dehydrogenase (decarboxylating) subunit 1">
    <location>
        <begin position="1"/>
        <end position="443"/>
    </location>
</feature>
<comment type="function">
    <text evidence="1">The glycine cleavage system catalyzes the degradation of glycine. The P protein binds the alpha-amino group of glycine through its pyridoxal phosphate cofactor; CO(2) is released and the remaining methylamine moiety is then transferred to the lipoamide cofactor of the H protein.</text>
</comment>
<comment type="catalytic activity">
    <reaction evidence="1">
        <text>N(6)-[(R)-lipoyl]-L-lysyl-[glycine-cleavage complex H protein] + glycine + H(+) = N(6)-[(R)-S(8)-aminomethyldihydrolipoyl]-L-lysyl-[glycine-cleavage complex H protein] + CO2</text>
        <dbReference type="Rhea" id="RHEA:24304"/>
        <dbReference type="Rhea" id="RHEA-COMP:10494"/>
        <dbReference type="Rhea" id="RHEA-COMP:10495"/>
        <dbReference type="ChEBI" id="CHEBI:15378"/>
        <dbReference type="ChEBI" id="CHEBI:16526"/>
        <dbReference type="ChEBI" id="CHEBI:57305"/>
        <dbReference type="ChEBI" id="CHEBI:83099"/>
        <dbReference type="ChEBI" id="CHEBI:83143"/>
        <dbReference type="EC" id="1.4.4.2"/>
    </reaction>
</comment>
<comment type="subunit">
    <text evidence="1">The glycine cleavage system is composed of four proteins: P, T, L and H. In this organism, the P 'protein' is a heterodimer of two subunits.</text>
</comment>
<comment type="similarity">
    <text evidence="1">Belongs to the GcvP family. N-terminal subunit subfamily.</text>
</comment>
<accession>Q311A7</accession>
<reference key="1">
    <citation type="journal article" date="2011" name="J. Bacteriol.">
        <title>Complete genome sequence and updated annotation of Desulfovibrio alaskensis G20.</title>
        <authorList>
            <person name="Hauser L.J."/>
            <person name="Land M.L."/>
            <person name="Brown S.D."/>
            <person name="Larimer F."/>
            <person name="Keller K.L."/>
            <person name="Rapp-Giles B.J."/>
            <person name="Price M.N."/>
            <person name="Lin M."/>
            <person name="Bruce D.C."/>
            <person name="Detter J.C."/>
            <person name="Tapia R."/>
            <person name="Han C.S."/>
            <person name="Goodwin L.A."/>
            <person name="Cheng J.F."/>
            <person name="Pitluck S."/>
            <person name="Copeland A."/>
            <person name="Lucas S."/>
            <person name="Nolan M."/>
            <person name="Lapidus A.L."/>
            <person name="Palumbo A.V."/>
            <person name="Wall J.D."/>
        </authorList>
    </citation>
    <scope>NUCLEOTIDE SEQUENCE [LARGE SCALE GENOMIC DNA]</scope>
    <source>
        <strain>ATCC BAA-1058 / DSM 17464 / G20</strain>
    </source>
</reference>
<evidence type="ECO:0000255" key="1">
    <source>
        <dbReference type="HAMAP-Rule" id="MF_00712"/>
    </source>
</evidence>